<evidence type="ECO:0000255" key="1">
    <source>
        <dbReference type="HAMAP-Rule" id="MF_00274"/>
    </source>
</evidence>
<protein>
    <recommendedName>
        <fullName evidence="1">Nucleoid-associated protein BU482</fullName>
    </recommendedName>
</protein>
<feature type="chain" id="PRO_0000170373" description="Nucleoid-associated protein BU482">
    <location>
        <begin position="1"/>
        <end position="109"/>
    </location>
</feature>
<reference key="1">
    <citation type="journal article" date="2000" name="Nature">
        <title>Genome sequence of the endocellular bacterial symbiont of aphids Buchnera sp. APS.</title>
        <authorList>
            <person name="Shigenobu S."/>
            <person name="Watanabe H."/>
            <person name="Hattori M."/>
            <person name="Sakaki Y."/>
            <person name="Ishikawa H."/>
        </authorList>
    </citation>
    <scope>NUCLEOTIDE SEQUENCE [LARGE SCALE GENOMIC DNA]</scope>
    <source>
        <strain>APS</strain>
    </source>
</reference>
<organism>
    <name type="scientific">Buchnera aphidicola subsp. Acyrthosiphon pisum (strain APS)</name>
    <name type="common">Acyrthosiphon pisum symbiotic bacterium</name>
    <dbReference type="NCBI Taxonomy" id="107806"/>
    <lineage>
        <taxon>Bacteria</taxon>
        <taxon>Pseudomonadati</taxon>
        <taxon>Pseudomonadota</taxon>
        <taxon>Gammaproteobacteria</taxon>
        <taxon>Enterobacterales</taxon>
        <taxon>Erwiniaceae</taxon>
        <taxon>Buchnera</taxon>
    </lineage>
</organism>
<sequence length="109" mass="11897">MFTKGGLGNLMKQAQQMQEKMAKIQEEIAQMEVTGEAGAGLVKVTINGAHNCRRVEVDPSLLQDDKDMLEDLAAAAFNDATRRISEVQKKKMSAISTGMQLPNGFNMPV</sequence>
<name>Y482_BUCAI</name>
<comment type="function">
    <text evidence="1">Binds to DNA and alters its conformation. May be involved in regulation of gene expression, nucleoid organization and DNA protection.</text>
</comment>
<comment type="subunit">
    <text evidence="1">Homodimer.</text>
</comment>
<comment type="subcellular location">
    <subcellularLocation>
        <location evidence="1">Cytoplasm</location>
        <location evidence="1">Nucleoid</location>
    </subcellularLocation>
</comment>
<comment type="similarity">
    <text evidence="1">Belongs to the YbaB/EbfC family.</text>
</comment>
<proteinExistence type="inferred from homology"/>
<keyword id="KW-0963">Cytoplasm</keyword>
<keyword id="KW-0238">DNA-binding</keyword>
<keyword id="KW-1185">Reference proteome</keyword>
<accession>P57554</accession>
<dbReference type="EMBL" id="BA000003">
    <property type="protein sequence ID" value="BAB13179.1"/>
    <property type="molecule type" value="Genomic_DNA"/>
</dbReference>
<dbReference type="RefSeq" id="NP_240293.1">
    <property type="nucleotide sequence ID" value="NC_002528.1"/>
</dbReference>
<dbReference type="RefSeq" id="WP_009874435.1">
    <property type="nucleotide sequence ID" value="NZ_AP036055.1"/>
</dbReference>
<dbReference type="SMR" id="P57554"/>
<dbReference type="STRING" id="563178.BUAP5A_475"/>
<dbReference type="EnsemblBacteria" id="BAB13179">
    <property type="protein sequence ID" value="BAB13179"/>
    <property type="gene ID" value="BAB13179"/>
</dbReference>
<dbReference type="KEGG" id="buc:BU482"/>
<dbReference type="PATRIC" id="fig|107806.10.peg.491"/>
<dbReference type="eggNOG" id="COG0718">
    <property type="taxonomic scope" value="Bacteria"/>
</dbReference>
<dbReference type="HOGENOM" id="CLU_140930_0_0_6"/>
<dbReference type="BioCyc" id="BAPH107806:GBZJ-475-MONOMER"/>
<dbReference type="Proteomes" id="UP000001806">
    <property type="component" value="Chromosome"/>
</dbReference>
<dbReference type="GO" id="GO:0043590">
    <property type="term" value="C:bacterial nucleoid"/>
    <property type="evidence" value="ECO:0007669"/>
    <property type="project" value="UniProtKB-UniRule"/>
</dbReference>
<dbReference type="GO" id="GO:0005829">
    <property type="term" value="C:cytosol"/>
    <property type="evidence" value="ECO:0007669"/>
    <property type="project" value="TreeGrafter"/>
</dbReference>
<dbReference type="GO" id="GO:0003677">
    <property type="term" value="F:DNA binding"/>
    <property type="evidence" value="ECO:0007669"/>
    <property type="project" value="UniProtKB-UniRule"/>
</dbReference>
<dbReference type="FunFam" id="3.30.1310.10:FF:000001">
    <property type="entry name" value="Nucleoid-associated protein YbaB"/>
    <property type="match status" value="1"/>
</dbReference>
<dbReference type="Gene3D" id="3.30.1310.10">
    <property type="entry name" value="Nucleoid-associated protein YbaB-like domain"/>
    <property type="match status" value="1"/>
</dbReference>
<dbReference type="HAMAP" id="MF_00274">
    <property type="entry name" value="DNA_YbaB_EbfC"/>
    <property type="match status" value="1"/>
</dbReference>
<dbReference type="InterPro" id="IPR036894">
    <property type="entry name" value="YbaB-like_sf"/>
</dbReference>
<dbReference type="InterPro" id="IPR004401">
    <property type="entry name" value="YbaB/EbfC"/>
</dbReference>
<dbReference type="NCBIfam" id="TIGR00103">
    <property type="entry name" value="DNA_YbaB_EbfC"/>
    <property type="match status" value="1"/>
</dbReference>
<dbReference type="PANTHER" id="PTHR33449">
    <property type="entry name" value="NUCLEOID-ASSOCIATED PROTEIN YBAB"/>
    <property type="match status" value="1"/>
</dbReference>
<dbReference type="PANTHER" id="PTHR33449:SF1">
    <property type="entry name" value="NUCLEOID-ASSOCIATED PROTEIN YBAB"/>
    <property type="match status" value="1"/>
</dbReference>
<dbReference type="Pfam" id="PF02575">
    <property type="entry name" value="YbaB_DNA_bd"/>
    <property type="match status" value="1"/>
</dbReference>
<dbReference type="PIRSF" id="PIRSF004555">
    <property type="entry name" value="UCP004555"/>
    <property type="match status" value="1"/>
</dbReference>
<dbReference type="SUPFAM" id="SSF82607">
    <property type="entry name" value="YbaB-like"/>
    <property type="match status" value="1"/>
</dbReference>
<gene>
    <name type="ordered locus">BU482</name>
</gene>